<protein>
    <recommendedName>
        <fullName>Aromatase</fullName>
        <ecNumber evidence="2">1.14.14.14</ecNumber>
    </recommendedName>
    <alternativeName>
        <fullName>CYPXIX</fullName>
    </alternativeName>
    <alternativeName>
        <fullName>Cytochrome P-450AROM</fullName>
    </alternativeName>
    <alternativeName>
        <fullName>Cytochrome P450 19A1</fullName>
    </alternativeName>
    <alternativeName>
        <fullName>Estrogen synthase</fullName>
    </alternativeName>
</protein>
<feature type="chain" id="PRO_0000051965" description="Aromatase">
    <location>
        <begin position="1"/>
        <end position="327" status="greater than"/>
    </location>
</feature>
<feature type="binding site" description="axial binding residue" evidence="1">
    <location>
        <position position="315"/>
    </location>
    <ligand>
        <name>heme</name>
        <dbReference type="ChEBI" id="CHEBI:30413"/>
    </ligand>
    <ligandPart>
        <name>Fe</name>
        <dbReference type="ChEBI" id="CHEBI:18248"/>
    </ligandPart>
</feature>
<feature type="non-consecutive residues" evidence="3">
    <location>
        <begin position="97"/>
        <end position="98"/>
    </location>
</feature>
<feature type="non-terminal residue">
    <location>
        <position position="327"/>
    </location>
</feature>
<name>CP19A_COTJA</name>
<gene>
    <name type="primary">CYP19A1</name>
    <name type="synonym">CYP19</name>
</gene>
<comment type="function">
    <text>Catalyzes the formation of aromatic C18 estrogens from C19 androgens.</text>
</comment>
<comment type="catalytic activity">
    <reaction evidence="2">
        <text>testosterone + 3 reduced [NADPH--hemoprotein reductase] + 3 O2 = 17beta-estradiol + formate + 3 oxidized [NADPH--hemoprotein reductase] + 4 H2O + 4 H(+)</text>
        <dbReference type="Rhea" id="RHEA:38191"/>
        <dbReference type="Rhea" id="RHEA-COMP:11964"/>
        <dbReference type="Rhea" id="RHEA-COMP:11965"/>
        <dbReference type="ChEBI" id="CHEBI:15377"/>
        <dbReference type="ChEBI" id="CHEBI:15378"/>
        <dbReference type="ChEBI" id="CHEBI:15379"/>
        <dbReference type="ChEBI" id="CHEBI:15740"/>
        <dbReference type="ChEBI" id="CHEBI:16469"/>
        <dbReference type="ChEBI" id="CHEBI:17347"/>
        <dbReference type="ChEBI" id="CHEBI:57618"/>
        <dbReference type="ChEBI" id="CHEBI:58210"/>
        <dbReference type="EC" id="1.14.14.14"/>
    </reaction>
</comment>
<comment type="catalytic activity">
    <reaction evidence="2">
        <text>androst-4-ene-3,17-dione + 3 reduced [NADPH--hemoprotein reductase] + 3 O2 = estrone + formate + 3 oxidized [NADPH--hemoprotein reductase] + 4 H2O + 4 H(+)</text>
        <dbReference type="Rhea" id="RHEA:38195"/>
        <dbReference type="Rhea" id="RHEA-COMP:11964"/>
        <dbReference type="Rhea" id="RHEA-COMP:11965"/>
        <dbReference type="ChEBI" id="CHEBI:15377"/>
        <dbReference type="ChEBI" id="CHEBI:15378"/>
        <dbReference type="ChEBI" id="CHEBI:15379"/>
        <dbReference type="ChEBI" id="CHEBI:15740"/>
        <dbReference type="ChEBI" id="CHEBI:16422"/>
        <dbReference type="ChEBI" id="CHEBI:17263"/>
        <dbReference type="ChEBI" id="CHEBI:57618"/>
        <dbReference type="ChEBI" id="CHEBI:58210"/>
        <dbReference type="EC" id="1.14.14.14"/>
    </reaction>
</comment>
<comment type="cofactor">
    <cofactor evidence="1">
        <name>heme</name>
        <dbReference type="ChEBI" id="CHEBI:30413"/>
    </cofactor>
</comment>
<comment type="subcellular location">
    <subcellularLocation>
        <location>Membrane</location>
        <topology>Peripheral membrane protein</topology>
    </subcellularLocation>
</comment>
<comment type="similarity">
    <text evidence="3">Belongs to the cytochrome P450 family.</text>
</comment>
<organism>
    <name type="scientific">Coturnix japonica</name>
    <name type="common">Japanese quail</name>
    <name type="synonym">Coturnix coturnix japonica</name>
    <dbReference type="NCBI Taxonomy" id="93934"/>
    <lineage>
        <taxon>Eukaryota</taxon>
        <taxon>Metazoa</taxon>
        <taxon>Chordata</taxon>
        <taxon>Craniata</taxon>
        <taxon>Vertebrata</taxon>
        <taxon>Euteleostomi</taxon>
        <taxon>Archelosauria</taxon>
        <taxon>Archosauria</taxon>
        <taxon>Dinosauria</taxon>
        <taxon>Saurischia</taxon>
        <taxon>Theropoda</taxon>
        <taxon>Coelurosauria</taxon>
        <taxon>Aves</taxon>
        <taxon>Neognathae</taxon>
        <taxon>Galloanserae</taxon>
        <taxon>Galliformes</taxon>
        <taxon>Phasianidae</taxon>
        <taxon>Perdicinae</taxon>
        <taxon>Coturnix</taxon>
    </lineage>
</organism>
<sequence>MIPETLNPLNYYTSLVPDLIPAATVPIIILICVLFLIWNHEGTSSIPGPGYCMGIGPLISHGRFLWMGVGNACNYYNKTYGEFVRVWFSGEETFIISYFDAWQALLLKPDIFFKISWLCKKYEEAAKDLKGAMEILIEQKRQKLSTVEKLDEHMDFASQLIFAQNRGDLTAENVNQCVLEMMIAAPDTLSVTLFIMLILIAEHPTVEEKMMREIETVMGDRDVQSDDMPNLKIVENFIYESMRYQPVVDLIMRKALQDDVIDGYPVKKGTNIILNIGRMHKLEFFPKPNEFSLENFEKNVPSRYFQPFGFGPRGCVGKFIAMVMMKA</sequence>
<proteinExistence type="evidence at transcript level"/>
<accession>P79699</accession>
<accession>Q92150</accession>
<dbReference type="EC" id="1.14.14.14" evidence="2"/>
<dbReference type="EMBL" id="D50336">
    <property type="protein sequence ID" value="BAA08872.1"/>
    <property type="molecule type" value="Genomic_DNA"/>
</dbReference>
<dbReference type="EMBL" id="S46949">
    <property type="protein sequence ID" value="AAB23955.1"/>
    <property type="molecule type" value="mRNA"/>
</dbReference>
<dbReference type="PIR" id="A48977">
    <property type="entry name" value="A48977"/>
</dbReference>
<dbReference type="SMR" id="P79699"/>
<dbReference type="Proteomes" id="UP000694412">
    <property type="component" value="Unplaced"/>
</dbReference>
<dbReference type="GO" id="GO:0005783">
    <property type="term" value="C:endoplasmic reticulum"/>
    <property type="evidence" value="ECO:0007669"/>
    <property type="project" value="TreeGrafter"/>
</dbReference>
<dbReference type="GO" id="GO:0016020">
    <property type="term" value="C:membrane"/>
    <property type="evidence" value="ECO:0007669"/>
    <property type="project" value="UniProtKB-SubCell"/>
</dbReference>
<dbReference type="GO" id="GO:0070330">
    <property type="term" value="F:aromatase activity"/>
    <property type="evidence" value="ECO:0007669"/>
    <property type="project" value="UniProtKB-EC"/>
</dbReference>
<dbReference type="GO" id="GO:0020037">
    <property type="term" value="F:heme binding"/>
    <property type="evidence" value="ECO:0007669"/>
    <property type="project" value="InterPro"/>
</dbReference>
<dbReference type="GO" id="GO:0005506">
    <property type="term" value="F:iron ion binding"/>
    <property type="evidence" value="ECO:0007669"/>
    <property type="project" value="InterPro"/>
</dbReference>
<dbReference type="GO" id="GO:0008585">
    <property type="term" value="P:female gonad development"/>
    <property type="evidence" value="ECO:0007669"/>
    <property type="project" value="TreeGrafter"/>
</dbReference>
<dbReference type="GO" id="GO:0006629">
    <property type="term" value="P:lipid metabolic process"/>
    <property type="evidence" value="ECO:0007669"/>
    <property type="project" value="UniProtKB-KW"/>
</dbReference>
<dbReference type="GO" id="GO:0032355">
    <property type="term" value="P:response to estradiol"/>
    <property type="evidence" value="ECO:0007669"/>
    <property type="project" value="TreeGrafter"/>
</dbReference>
<dbReference type="Gene3D" id="1.10.630.10">
    <property type="entry name" value="Cytochrome P450"/>
    <property type="match status" value="1"/>
</dbReference>
<dbReference type="InterPro" id="IPR001128">
    <property type="entry name" value="Cyt_P450"/>
</dbReference>
<dbReference type="InterPro" id="IPR002397">
    <property type="entry name" value="Cyt_P450_B"/>
</dbReference>
<dbReference type="InterPro" id="IPR017972">
    <property type="entry name" value="Cyt_P450_CS"/>
</dbReference>
<dbReference type="InterPro" id="IPR036396">
    <property type="entry name" value="Cyt_P450_sf"/>
</dbReference>
<dbReference type="InterPro" id="IPR050196">
    <property type="entry name" value="Cytochrome_P450_Monoox"/>
</dbReference>
<dbReference type="PANTHER" id="PTHR24291:SF43">
    <property type="entry name" value="AROMATASE"/>
    <property type="match status" value="1"/>
</dbReference>
<dbReference type="PANTHER" id="PTHR24291">
    <property type="entry name" value="CYTOCHROME P450 FAMILY 4"/>
    <property type="match status" value="1"/>
</dbReference>
<dbReference type="Pfam" id="PF00067">
    <property type="entry name" value="p450"/>
    <property type="match status" value="1"/>
</dbReference>
<dbReference type="PRINTS" id="PR00359">
    <property type="entry name" value="BP450"/>
</dbReference>
<dbReference type="PRINTS" id="PR00385">
    <property type="entry name" value="P450"/>
</dbReference>
<dbReference type="SUPFAM" id="SSF48264">
    <property type="entry name" value="Cytochrome P450"/>
    <property type="match status" value="1"/>
</dbReference>
<dbReference type="PROSITE" id="PS00086">
    <property type="entry name" value="CYTOCHROME_P450"/>
    <property type="match status" value="1"/>
</dbReference>
<reference key="1">
    <citation type="journal article" date="1996" name="J. Reprod. Dev.">
        <title>Comparison of 5' upstream regions of chicken and quail aromatase genes.</title>
        <authorList>
            <person name="Kudo T."/>
            <person name="Yamamoto H."/>
            <person name="Sato S."/>
            <person name="Sutou S."/>
        </authorList>
    </citation>
    <scope>NUCLEOTIDE SEQUENCE OF 1-97</scope>
</reference>
<reference key="2">
    <citation type="journal article" date="1992" name="Brain Res. Mol. Brain Res.">
        <title>Regulation of aromatase cytochrome P-450 (estrogen synthetase) transcripts in the quail brain by testosterone.</title>
        <authorList>
            <person name="Harada N."/>
            <person name="Yamada K."/>
            <person name="Foidart A."/>
            <person name="Balthazart J."/>
        </authorList>
    </citation>
    <scope>NUCLEOTIDE SEQUENCE [MRNA] OF 98-327</scope>
    <source>
        <tissue>Brain</tissue>
    </source>
</reference>
<evidence type="ECO:0000250" key="1"/>
<evidence type="ECO:0000250" key="2">
    <source>
        <dbReference type="UniProtKB" id="P11511"/>
    </source>
</evidence>
<evidence type="ECO:0000305" key="3"/>
<keyword id="KW-0349">Heme</keyword>
<keyword id="KW-0408">Iron</keyword>
<keyword id="KW-0443">Lipid metabolism</keyword>
<keyword id="KW-0472">Membrane</keyword>
<keyword id="KW-0479">Metal-binding</keyword>
<keyword id="KW-0503">Monooxygenase</keyword>
<keyword id="KW-0560">Oxidoreductase</keyword>
<keyword id="KW-1185">Reference proteome</keyword>